<gene>
    <name type="primary">tpst-2</name>
    <name type="ORF">F42G9.8</name>
</gene>
<sequence length="259" mass="29922">MRAILDAHPDVRCGGETMLLPSFLTWQAGWRNDWVNNSGITQEVFDDAVSAFITEIVAKHSELAPRLCNKDPYTALWLPTIRRLYPNAKFILMIRDARAVVHSMIERKVPVAGYNTSDEISMFVQWNQELRKMTFQCNNAPGQCIKVYYERLIQKPAEEILRITNFLDLPFSQQMLRHQDLIGDEVDLNDQEFSASQVKNSINTKALTSWFDCFSEETLRKLDDVAPFLGILGYDTSISKPDYSTFADDDFYQFKNFYS</sequence>
<evidence type="ECO:0000250" key="1">
    <source>
        <dbReference type="UniProtKB" id="O60704"/>
    </source>
</evidence>
<evidence type="ECO:0000255" key="2"/>
<evidence type="ECO:0000305" key="3"/>
<keyword id="KW-1015">Disulfide bond</keyword>
<keyword id="KW-0325">Glycoprotein</keyword>
<keyword id="KW-1185">Reference proteome</keyword>
<keyword id="KW-0808">Transferase</keyword>
<comment type="function">
    <text evidence="1">Catalyzes the O-sulfation of tyrosine residues within acidic motifs of polypeptides, using 3'-phosphoadenylyl sulfate (PAPS) as cosubstrate.</text>
</comment>
<comment type="catalytic activity">
    <reaction evidence="1">
        <text>L-tyrosyl-[protein] + 3'-phosphoadenylyl sulfate = O-sulfo-L-tyrosine-[protein] + adenosine 3',5'-bisphosphate + H(+)</text>
        <dbReference type="Rhea" id="RHEA:16801"/>
        <dbReference type="Rhea" id="RHEA-COMP:10136"/>
        <dbReference type="Rhea" id="RHEA-COMP:11688"/>
        <dbReference type="ChEBI" id="CHEBI:15378"/>
        <dbReference type="ChEBI" id="CHEBI:46858"/>
        <dbReference type="ChEBI" id="CHEBI:58339"/>
        <dbReference type="ChEBI" id="CHEBI:58343"/>
        <dbReference type="ChEBI" id="CHEBI:65286"/>
        <dbReference type="EC" id="2.8.2.20"/>
    </reaction>
</comment>
<comment type="similarity">
    <text evidence="3">Belongs to the protein sulfotransferase family.</text>
</comment>
<protein>
    <recommendedName>
        <fullName>Putative protein-tyrosine sulfotransferase</fullName>
        <ecNumber evidence="1">2.8.2.20</ecNumber>
    </recommendedName>
    <alternativeName>
        <fullName>Tyrosylprotein sulfotransferase</fullName>
        <shortName>TPST</shortName>
    </alternativeName>
</protein>
<dbReference type="EC" id="2.8.2.20" evidence="1"/>
<dbReference type="EMBL" id="FO080196">
    <property type="protein sequence ID" value="CCD61891.1"/>
    <property type="molecule type" value="Genomic_DNA"/>
</dbReference>
<dbReference type="PIR" id="T16350">
    <property type="entry name" value="T16350"/>
</dbReference>
<dbReference type="RefSeq" id="NP_001379576.1">
    <property type="nucleotide sequence ID" value="NM_001393263.1"/>
</dbReference>
<dbReference type="RefSeq" id="NP_497256.1">
    <property type="nucleotide sequence ID" value="NM_064855.1"/>
</dbReference>
<dbReference type="SMR" id="Q20351"/>
<dbReference type="BioGRID" id="50441">
    <property type="interactions" value="5"/>
</dbReference>
<dbReference type="IntAct" id="Q20351">
    <property type="interactions" value="5"/>
</dbReference>
<dbReference type="STRING" id="6239.F42G9.8.1"/>
<dbReference type="GlyCosmos" id="Q20351">
    <property type="glycosylation" value="2 sites, No reported glycans"/>
</dbReference>
<dbReference type="PaxDb" id="6239-F42G9.8"/>
<dbReference type="EnsemblMetazoa" id="F42G9.8.1">
    <property type="protein sequence ID" value="F42G9.8.1"/>
    <property type="gene ID" value="WBGene00018365"/>
</dbReference>
<dbReference type="EnsemblMetazoa" id="F42G9.8.2">
    <property type="protein sequence ID" value="F42G9.8.2"/>
    <property type="gene ID" value="WBGene00018365"/>
</dbReference>
<dbReference type="GeneID" id="185681"/>
<dbReference type="AGR" id="WB:WBGene00018365"/>
<dbReference type="WormBase" id="F42G9.8">
    <property type="protein sequence ID" value="CE24966"/>
    <property type="gene ID" value="WBGene00018365"/>
    <property type="gene designation" value="tpst-2"/>
</dbReference>
<dbReference type="eggNOG" id="KOG3988">
    <property type="taxonomic scope" value="Eukaryota"/>
</dbReference>
<dbReference type="GeneTree" id="ENSGT00390000006030"/>
<dbReference type="HOGENOM" id="CLU_046916_0_0_1"/>
<dbReference type="InParanoid" id="Q20351"/>
<dbReference type="OMA" id="DPYTALW"/>
<dbReference type="OrthoDB" id="545675at2759"/>
<dbReference type="PhylomeDB" id="Q20351"/>
<dbReference type="PRO" id="PR:Q20351"/>
<dbReference type="Proteomes" id="UP000001940">
    <property type="component" value="Chromosome III"/>
</dbReference>
<dbReference type="Bgee" id="WBGene00018365">
    <property type="expression patterns" value="Expressed in pharyngeal muscle cell (C elegans) and 2 other cell types or tissues"/>
</dbReference>
<dbReference type="GO" id="GO:0005794">
    <property type="term" value="C:Golgi apparatus"/>
    <property type="evidence" value="ECO:0000318"/>
    <property type="project" value="GO_Central"/>
</dbReference>
<dbReference type="GO" id="GO:0008476">
    <property type="term" value="F:protein-tyrosine sulfotransferase activity"/>
    <property type="evidence" value="ECO:0000318"/>
    <property type="project" value="GO_Central"/>
</dbReference>
<dbReference type="FunFam" id="3.40.50.300:FF:002853">
    <property type="entry name" value="Protein-tyrosine sulfotransferase"/>
    <property type="match status" value="1"/>
</dbReference>
<dbReference type="Gene3D" id="3.40.50.300">
    <property type="entry name" value="P-loop containing nucleotide triphosphate hydrolases"/>
    <property type="match status" value="1"/>
</dbReference>
<dbReference type="InterPro" id="IPR027417">
    <property type="entry name" value="P-loop_NTPase"/>
</dbReference>
<dbReference type="InterPro" id="IPR026634">
    <property type="entry name" value="TPST-like"/>
</dbReference>
<dbReference type="PANTHER" id="PTHR12788">
    <property type="entry name" value="PROTEIN-TYROSINE SULFOTRANSFERASE 2"/>
    <property type="match status" value="1"/>
</dbReference>
<dbReference type="PANTHER" id="PTHR12788:SF7">
    <property type="entry name" value="PROTEIN-TYROSINE SULFOTRANSFERASE-RELATED"/>
    <property type="match status" value="1"/>
</dbReference>
<dbReference type="Pfam" id="PF13469">
    <property type="entry name" value="Sulfotransfer_3"/>
    <property type="match status" value="1"/>
</dbReference>
<dbReference type="SUPFAM" id="SSF52540">
    <property type="entry name" value="P-loop containing nucleoside triphosphate hydrolases"/>
    <property type="match status" value="1"/>
</dbReference>
<proteinExistence type="inferred from homology"/>
<feature type="chain" id="PRO_0000189832" description="Putative protein-tyrosine sulfotransferase">
    <location>
        <begin position="1"/>
        <end position="259"/>
    </location>
</feature>
<feature type="active site" description="Proton donor/acceptor" evidence="1">
    <location>
        <position position="16"/>
    </location>
</feature>
<feature type="binding site" evidence="1">
    <location>
        <position position="95"/>
    </location>
    <ligand>
        <name>3'-phosphoadenylyl sulfate</name>
        <dbReference type="ChEBI" id="CHEBI:58339"/>
    </ligand>
</feature>
<feature type="binding site" evidence="1">
    <location>
        <position position="103"/>
    </location>
    <ligand>
        <name>3'-phosphoadenylyl sulfate</name>
        <dbReference type="ChEBI" id="CHEBI:58339"/>
    </ligand>
</feature>
<feature type="binding site" evidence="1">
    <location>
        <position position="107"/>
    </location>
    <ligand>
        <name>3'-phosphoadenylyl sulfate</name>
        <dbReference type="ChEBI" id="CHEBI:58339"/>
    </ligand>
</feature>
<feature type="binding site" evidence="1">
    <location>
        <position position="149"/>
    </location>
    <ligand>
        <name>3'-phosphoadenylyl sulfate</name>
        <dbReference type="ChEBI" id="CHEBI:58339"/>
    </ligand>
</feature>
<feature type="binding site" evidence="1">
    <location>
        <begin position="194"/>
        <end position="203"/>
    </location>
    <ligand>
        <name>3'-phosphoadenylyl sulfate</name>
        <dbReference type="ChEBI" id="CHEBI:58339"/>
    </ligand>
</feature>
<feature type="site" description="Transition state stabilizer" evidence="1">
    <location>
        <position position="70"/>
    </location>
</feature>
<feature type="site" description="Transition state stabilizer" evidence="1">
    <location>
        <position position="194"/>
    </location>
</feature>
<feature type="glycosylation site" description="N-linked (GlcNAc...) asparagine" evidence="2">
    <location>
        <position position="36"/>
    </location>
</feature>
<feature type="glycosylation site" description="N-linked (GlcNAc...) asparagine" evidence="2">
    <location>
        <position position="115"/>
    </location>
</feature>
<feature type="disulfide bond" evidence="1">
    <location>
        <begin position="13"/>
        <end position="68"/>
    </location>
</feature>
<feature type="disulfide bond" evidence="1">
    <location>
        <begin position="137"/>
        <end position="144"/>
    </location>
</feature>
<reference key="1">
    <citation type="journal article" date="1998" name="Science">
        <title>Genome sequence of the nematode C. elegans: a platform for investigating biology.</title>
        <authorList>
            <consortium name="The C. elegans sequencing consortium"/>
        </authorList>
    </citation>
    <scope>NUCLEOTIDE SEQUENCE [LARGE SCALE GENOMIC DNA]</scope>
    <source>
        <strain>Bristol N2</strain>
    </source>
</reference>
<reference key="2">
    <citation type="journal article" date="1998" name="Proc. Natl. Acad. Sci. U.S.A.">
        <title>Existence of distinct tyrosylprotein sulfotransferase genes: molecular characterization of tyrosylprotein sulfotransferase-2.</title>
        <authorList>
            <person name="Beisswanger R."/>
            <person name="Corbeil D."/>
            <person name="Vannier C."/>
            <person name="Thiele C."/>
            <person name="Dohrmann U."/>
            <person name="Kellner R."/>
            <person name="Ashman K."/>
            <person name="Niehrs C."/>
            <person name="Huttner W.B."/>
        </authorList>
    </citation>
    <scope>IDENTIFICATION</scope>
</reference>
<organism>
    <name type="scientific">Caenorhabditis elegans</name>
    <dbReference type="NCBI Taxonomy" id="6239"/>
    <lineage>
        <taxon>Eukaryota</taxon>
        <taxon>Metazoa</taxon>
        <taxon>Ecdysozoa</taxon>
        <taxon>Nematoda</taxon>
        <taxon>Chromadorea</taxon>
        <taxon>Rhabditida</taxon>
        <taxon>Rhabditina</taxon>
        <taxon>Rhabditomorpha</taxon>
        <taxon>Rhabditoidea</taxon>
        <taxon>Rhabditidae</taxon>
        <taxon>Peloderinae</taxon>
        <taxon>Caenorhabditis</taxon>
    </lineage>
</organism>
<name>TPSTB_CAEEL</name>
<accession>Q20351</accession>
<accession>Q8T8N1</accession>